<proteinExistence type="inferred from homology"/>
<geneLocation type="chloroplast"/>
<dbReference type="EC" id="2.1.3.15" evidence="2"/>
<dbReference type="EMBL" id="AP009376">
    <property type="protein sequence ID" value="BAF50647.1"/>
    <property type="molecule type" value="Genomic_DNA"/>
</dbReference>
<dbReference type="RefSeq" id="YP_001123823.1">
    <property type="nucleotide sequence ID" value="NC_009275.1"/>
</dbReference>
<dbReference type="SMR" id="A4QLU2"/>
<dbReference type="GeneID" id="4962145"/>
<dbReference type="UniPathway" id="UPA00655">
    <property type="reaction ID" value="UER00711"/>
</dbReference>
<dbReference type="GO" id="GO:0009317">
    <property type="term" value="C:acetyl-CoA carboxylase complex"/>
    <property type="evidence" value="ECO:0007669"/>
    <property type="project" value="InterPro"/>
</dbReference>
<dbReference type="GO" id="GO:0009570">
    <property type="term" value="C:chloroplast stroma"/>
    <property type="evidence" value="ECO:0007669"/>
    <property type="project" value="UniProtKB-SubCell"/>
</dbReference>
<dbReference type="GO" id="GO:0003989">
    <property type="term" value="F:acetyl-CoA carboxylase activity"/>
    <property type="evidence" value="ECO:0007669"/>
    <property type="project" value="InterPro"/>
</dbReference>
<dbReference type="GO" id="GO:0005524">
    <property type="term" value="F:ATP binding"/>
    <property type="evidence" value="ECO:0007669"/>
    <property type="project" value="UniProtKB-KW"/>
</dbReference>
<dbReference type="GO" id="GO:0016743">
    <property type="term" value="F:carboxyl- or carbamoyltransferase activity"/>
    <property type="evidence" value="ECO:0007669"/>
    <property type="project" value="UniProtKB-UniRule"/>
</dbReference>
<dbReference type="GO" id="GO:0008270">
    <property type="term" value="F:zinc ion binding"/>
    <property type="evidence" value="ECO:0007669"/>
    <property type="project" value="UniProtKB-UniRule"/>
</dbReference>
<dbReference type="GO" id="GO:0006633">
    <property type="term" value="P:fatty acid biosynthetic process"/>
    <property type="evidence" value="ECO:0007669"/>
    <property type="project" value="UniProtKB-KW"/>
</dbReference>
<dbReference type="GO" id="GO:2001295">
    <property type="term" value="P:malonyl-CoA biosynthetic process"/>
    <property type="evidence" value="ECO:0007669"/>
    <property type="project" value="UniProtKB-UniRule"/>
</dbReference>
<dbReference type="Gene3D" id="3.90.226.10">
    <property type="entry name" value="2-enoyl-CoA Hydratase, Chain A, domain 1"/>
    <property type="match status" value="1"/>
</dbReference>
<dbReference type="HAMAP" id="MF_01395">
    <property type="entry name" value="AcetylCoA_CT_beta"/>
    <property type="match status" value="1"/>
</dbReference>
<dbReference type="InterPro" id="IPR034733">
    <property type="entry name" value="AcCoA_carboxyl_beta"/>
</dbReference>
<dbReference type="InterPro" id="IPR000438">
    <property type="entry name" value="Acetyl_CoA_COase_Trfase_b_su"/>
</dbReference>
<dbReference type="InterPro" id="IPR029045">
    <property type="entry name" value="ClpP/crotonase-like_dom_sf"/>
</dbReference>
<dbReference type="InterPro" id="IPR011762">
    <property type="entry name" value="COA_CT_N"/>
</dbReference>
<dbReference type="NCBIfam" id="TIGR00515">
    <property type="entry name" value="accD"/>
    <property type="match status" value="1"/>
</dbReference>
<dbReference type="PANTHER" id="PTHR42995">
    <property type="entry name" value="ACETYL-COENZYME A CARBOXYLASE CARBOXYL TRANSFERASE SUBUNIT BETA, CHLOROPLASTIC"/>
    <property type="match status" value="1"/>
</dbReference>
<dbReference type="PANTHER" id="PTHR42995:SF5">
    <property type="entry name" value="ACETYL-COENZYME A CARBOXYLASE CARBOXYL TRANSFERASE SUBUNIT BETA, CHLOROPLASTIC"/>
    <property type="match status" value="1"/>
</dbReference>
<dbReference type="Pfam" id="PF01039">
    <property type="entry name" value="Carboxyl_trans"/>
    <property type="match status" value="1"/>
</dbReference>
<dbReference type="PRINTS" id="PR01070">
    <property type="entry name" value="ACCCTRFRASEB"/>
</dbReference>
<dbReference type="SUPFAM" id="SSF52096">
    <property type="entry name" value="ClpP/crotonase"/>
    <property type="match status" value="1"/>
</dbReference>
<dbReference type="PROSITE" id="PS50980">
    <property type="entry name" value="COA_CT_NTER"/>
    <property type="match status" value="1"/>
</dbReference>
<sequence>MEKSWFNLMFSKGELEYRGELSKAMDSFAPSEKTTISQDRFIYDMDKNFYGWGEHSSYSNNVDLLVSSKDIRNFISDDTFFIRDSNKNSYSIYFDIKKKKFEIDNVLSDLEFLFYSYWSSSYLNNRSKGDNDLHYDPYIKDTKYNCTNHINSCIDSYFRSHICIDSHFLSDSQNSNESYIYNFICSESGKIRERKNYKIRTNRNRSNLMSSKDFDITQNYNQLWIQCDNCYGLMYKKVKMNVCEQCGHYLKMSSSERIELSIDPGTWNPMDEDMVSADPIKFHLKEEPYKNRIDSAQKTTGLTDAVQTGTGQLNGIPVALGVMDFQFMGGSMGSVVGEKITRLIEYATNQCLPLILVCSSGGARMQEGSLSLMQMAKISSVLCDYQSSKKLFYISILTSPTTGGVTASFGMLGDIIIAEPYAYIAFAGKRVIEQTLKKAVPEGSQAAESLLRKGLLDAIVPRNPLKGVLSELFQLHAFCPLNKTEIK</sequence>
<comment type="function">
    <text evidence="2">Component of the acetyl coenzyme A carboxylase (ACC) complex. Biotin carboxylase (BC) catalyzes the carboxylation of biotin on its carrier protein (BCCP) and then the CO(2) group is transferred by the transcarboxylase to acetyl-CoA to form malonyl-CoA.</text>
</comment>
<comment type="catalytic activity">
    <reaction evidence="2">
        <text>N(6)-carboxybiotinyl-L-lysyl-[protein] + acetyl-CoA = N(6)-biotinyl-L-lysyl-[protein] + malonyl-CoA</text>
        <dbReference type="Rhea" id="RHEA:54728"/>
        <dbReference type="Rhea" id="RHEA-COMP:10505"/>
        <dbReference type="Rhea" id="RHEA-COMP:10506"/>
        <dbReference type="ChEBI" id="CHEBI:57288"/>
        <dbReference type="ChEBI" id="CHEBI:57384"/>
        <dbReference type="ChEBI" id="CHEBI:83144"/>
        <dbReference type="ChEBI" id="CHEBI:83145"/>
        <dbReference type="EC" id="2.1.3.15"/>
    </reaction>
</comment>
<comment type="cofactor">
    <cofactor evidence="2">
        <name>Zn(2+)</name>
        <dbReference type="ChEBI" id="CHEBI:29105"/>
    </cofactor>
    <text evidence="2">Binds 1 zinc ion per subunit.</text>
</comment>
<comment type="pathway">
    <text evidence="2">Lipid metabolism; malonyl-CoA biosynthesis; malonyl-CoA from acetyl-CoA: step 1/1.</text>
</comment>
<comment type="subunit">
    <text evidence="1">Acetyl-CoA carboxylase is a heterohexamer composed of biotin carboxyl carrier protein, biotin carboxylase and 2 subunits each of ACCase subunit alpha and ACCase plastid-coded subunit beta (accD).</text>
</comment>
<comment type="subcellular location">
    <subcellularLocation>
        <location evidence="2">Plastid</location>
        <location evidence="2">Chloroplast stroma</location>
    </subcellularLocation>
</comment>
<comment type="similarity">
    <text evidence="2">Belongs to the AccD/PCCB family.</text>
</comment>
<feature type="chain" id="PRO_0000359153" description="Acetyl-coenzyme A carboxylase carboxyl transferase subunit beta, chloroplastic">
    <location>
        <begin position="1"/>
        <end position="487"/>
    </location>
</feature>
<feature type="domain" description="CoA carboxyltransferase N-terminal" evidence="3">
    <location>
        <begin position="223"/>
        <end position="487"/>
    </location>
</feature>
<feature type="zinc finger region" description="C4-type" evidence="2">
    <location>
        <begin position="227"/>
        <end position="246"/>
    </location>
</feature>
<feature type="binding site" evidence="2">
    <location>
        <position position="227"/>
    </location>
    <ligand>
        <name>Zn(2+)</name>
        <dbReference type="ChEBI" id="CHEBI:29105"/>
    </ligand>
</feature>
<feature type="binding site" evidence="2">
    <location>
        <position position="230"/>
    </location>
    <ligand>
        <name>Zn(2+)</name>
        <dbReference type="ChEBI" id="CHEBI:29105"/>
    </ligand>
</feature>
<feature type="binding site" evidence="2">
    <location>
        <position position="243"/>
    </location>
    <ligand>
        <name>Zn(2+)</name>
        <dbReference type="ChEBI" id="CHEBI:29105"/>
    </ligand>
</feature>
<feature type="binding site" evidence="2">
    <location>
        <position position="246"/>
    </location>
    <ligand>
        <name>Zn(2+)</name>
        <dbReference type="ChEBI" id="CHEBI:29105"/>
    </ligand>
</feature>
<accession>A4QLU2</accession>
<protein>
    <recommendedName>
        <fullName evidence="2">Acetyl-coenzyme A carboxylase carboxyl transferase subunit beta, chloroplastic</fullName>
        <shortName evidence="2">ACCase subunit beta</shortName>
        <shortName evidence="2">Acetyl-CoA carboxylase carboxyltransferase subunit beta</shortName>
        <ecNumber evidence="2">2.1.3.15</ecNumber>
    </recommendedName>
</protein>
<keyword id="KW-0067">ATP-binding</keyword>
<keyword id="KW-0150">Chloroplast</keyword>
<keyword id="KW-0275">Fatty acid biosynthesis</keyword>
<keyword id="KW-0276">Fatty acid metabolism</keyword>
<keyword id="KW-0444">Lipid biosynthesis</keyword>
<keyword id="KW-0443">Lipid metabolism</keyword>
<keyword id="KW-0479">Metal-binding</keyword>
<keyword id="KW-0547">Nucleotide-binding</keyword>
<keyword id="KW-0934">Plastid</keyword>
<keyword id="KW-0808">Transferase</keyword>
<keyword id="KW-0862">Zinc</keyword>
<keyword id="KW-0863">Zinc-finger</keyword>
<name>ACCD_NASOF</name>
<organism>
    <name type="scientific">Nasturtium officinale</name>
    <name type="common">Watercress</name>
    <name type="synonym">Rorippa nasturtium-aquaticum</name>
    <dbReference type="NCBI Taxonomy" id="65948"/>
    <lineage>
        <taxon>Eukaryota</taxon>
        <taxon>Viridiplantae</taxon>
        <taxon>Streptophyta</taxon>
        <taxon>Embryophyta</taxon>
        <taxon>Tracheophyta</taxon>
        <taxon>Spermatophyta</taxon>
        <taxon>Magnoliopsida</taxon>
        <taxon>eudicotyledons</taxon>
        <taxon>Gunneridae</taxon>
        <taxon>Pentapetalae</taxon>
        <taxon>rosids</taxon>
        <taxon>malvids</taxon>
        <taxon>Brassicales</taxon>
        <taxon>Brassicaceae</taxon>
        <taxon>Cardamineae</taxon>
        <taxon>Nasturtium</taxon>
    </lineage>
</organism>
<reference key="1">
    <citation type="submission" date="2007-03" db="EMBL/GenBank/DDBJ databases">
        <title>Sequencing analysis of Nasturtium officinale chloroplast DNA.</title>
        <authorList>
            <person name="Hosouchi T."/>
            <person name="Tsuruoka H."/>
            <person name="Kotani H."/>
        </authorList>
    </citation>
    <scope>NUCLEOTIDE SEQUENCE [LARGE SCALE GENOMIC DNA]</scope>
</reference>
<evidence type="ECO:0000250" key="1"/>
<evidence type="ECO:0000255" key="2">
    <source>
        <dbReference type="HAMAP-Rule" id="MF_01395"/>
    </source>
</evidence>
<evidence type="ECO:0000255" key="3">
    <source>
        <dbReference type="PROSITE-ProRule" id="PRU01136"/>
    </source>
</evidence>
<gene>
    <name evidence="2" type="primary">accD</name>
</gene>